<feature type="chain" id="PRO_0000321773" description="Endoribonuclease YbeY">
    <location>
        <begin position="1"/>
        <end position="169"/>
    </location>
</feature>
<feature type="binding site" evidence="1">
    <location>
        <position position="126"/>
    </location>
    <ligand>
        <name>Zn(2+)</name>
        <dbReference type="ChEBI" id="CHEBI:29105"/>
        <note>catalytic</note>
    </ligand>
</feature>
<feature type="binding site" evidence="1">
    <location>
        <position position="130"/>
    </location>
    <ligand>
        <name>Zn(2+)</name>
        <dbReference type="ChEBI" id="CHEBI:29105"/>
        <note>catalytic</note>
    </ligand>
</feature>
<feature type="binding site" evidence="1">
    <location>
        <position position="136"/>
    </location>
    <ligand>
        <name>Zn(2+)</name>
        <dbReference type="ChEBI" id="CHEBI:29105"/>
        <note>catalytic</note>
    </ligand>
</feature>
<protein>
    <recommendedName>
        <fullName evidence="1">Endoribonuclease YbeY</fullName>
        <ecNumber evidence="1">3.1.-.-</ecNumber>
    </recommendedName>
</protein>
<reference key="1">
    <citation type="journal article" date="2007" name="Science">
        <title>Legumes symbioses: absence of nod genes in photosynthetic bradyrhizobia.</title>
        <authorList>
            <person name="Giraud E."/>
            <person name="Moulin L."/>
            <person name="Vallenet D."/>
            <person name="Barbe V."/>
            <person name="Cytryn E."/>
            <person name="Avarre J.-C."/>
            <person name="Jaubert M."/>
            <person name="Simon D."/>
            <person name="Cartieaux F."/>
            <person name="Prin Y."/>
            <person name="Bena G."/>
            <person name="Hannibal L."/>
            <person name="Fardoux J."/>
            <person name="Kojadinovic M."/>
            <person name="Vuillet L."/>
            <person name="Lajus A."/>
            <person name="Cruveiller S."/>
            <person name="Rouy Z."/>
            <person name="Mangenot S."/>
            <person name="Segurens B."/>
            <person name="Dossat C."/>
            <person name="Franck W.L."/>
            <person name="Chang W.-S."/>
            <person name="Saunders E."/>
            <person name="Bruce D."/>
            <person name="Richardson P."/>
            <person name="Normand P."/>
            <person name="Dreyfus B."/>
            <person name="Pignol D."/>
            <person name="Stacey G."/>
            <person name="Emerich D."/>
            <person name="Vermeglio A."/>
            <person name="Medigue C."/>
            <person name="Sadowsky M."/>
        </authorList>
    </citation>
    <scope>NUCLEOTIDE SEQUENCE [LARGE SCALE GENOMIC DNA]</scope>
    <source>
        <strain>BTAi1 / ATCC BAA-1182</strain>
    </source>
</reference>
<evidence type="ECO:0000255" key="1">
    <source>
        <dbReference type="HAMAP-Rule" id="MF_00009"/>
    </source>
</evidence>
<sequence>MPQSPIPTTEVIIAADCWQDQPDAEDVIHRAILAAAERVDAEVGDAEIAVMLTDDAGIRTLNSNWRGIDKPTNVLSFPALQPTGPRGDDDAPRMLGDIAIAYETMRREADEEQKPFDHHLSHLTVHGFLHLIGYDHESDAEAEEMEALETEILAHLGVPDPYADRERLD</sequence>
<proteinExistence type="inferred from homology"/>
<keyword id="KW-0963">Cytoplasm</keyword>
<keyword id="KW-0255">Endonuclease</keyword>
<keyword id="KW-0378">Hydrolase</keyword>
<keyword id="KW-0479">Metal-binding</keyword>
<keyword id="KW-0540">Nuclease</keyword>
<keyword id="KW-1185">Reference proteome</keyword>
<keyword id="KW-0690">Ribosome biogenesis</keyword>
<keyword id="KW-0698">rRNA processing</keyword>
<keyword id="KW-0862">Zinc</keyword>
<comment type="function">
    <text evidence="1">Single strand-specific metallo-endoribonuclease involved in late-stage 70S ribosome quality control and in maturation of the 3' terminus of the 16S rRNA.</text>
</comment>
<comment type="cofactor">
    <cofactor evidence="1">
        <name>Zn(2+)</name>
        <dbReference type="ChEBI" id="CHEBI:29105"/>
    </cofactor>
    <text evidence="1">Binds 1 zinc ion.</text>
</comment>
<comment type="subcellular location">
    <subcellularLocation>
        <location evidence="1">Cytoplasm</location>
    </subcellularLocation>
</comment>
<comment type="similarity">
    <text evidence="1">Belongs to the endoribonuclease YbeY family.</text>
</comment>
<gene>
    <name evidence="1" type="primary">ybeY</name>
    <name type="ordered locus">BBta_0048</name>
</gene>
<name>YBEY_BRASB</name>
<accession>A5E857</accession>
<dbReference type="EC" id="3.1.-.-" evidence="1"/>
<dbReference type="EMBL" id="CP000494">
    <property type="protein sequence ID" value="ABQ32351.1"/>
    <property type="molecule type" value="Genomic_DNA"/>
</dbReference>
<dbReference type="RefSeq" id="WP_011942575.1">
    <property type="nucleotide sequence ID" value="NC_009485.1"/>
</dbReference>
<dbReference type="SMR" id="A5E857"/>
<dbReference type="STRING" id="288000.BBta_0048"/>
<dbReference type="KEGG" id="bbt:BBta_0048"/>
<dbReference type="eggNOG" id="COG0319">
    <property type="taxonomic scope" value="Bacteria"/>
</dbReference>
<dbReference type="HOGENOM" id="CLU_106710_0_0_5"/>
<dbReference type="Proteomes" id="UP000000246">
    <property type="component" value="Chromosome"/>
</dbReference>
<dbReference type="GO" id="GO:0005737">
    <property type="term" value="C:cytoplasm"/>
    <property type="evidence" value="ECO:0007669"/>
    <property type="project" value="UniProtKB-SubCell"/>
</dbReference>
<dbReference type="GO" id="GO:0004222">
    <property type="term" value="F:metalloendopeptidase activity"/>
    <property type="evidence" value="ECO:0007669"/>
    <property type="project" value="InterPro"/>
</dbReference>
<dbReference type="GO" id="GO:0004521">
    <property type="term" value="F:RNA endonuclease activity"/>
    <property type="evidence" value="ECO:0007669"/>
    <property type="project" value="UniProtKB-UniRule"/>
</dbReference>
<dbReference type="GO" id="GO:0008270">
    <property type="term" value="F:zinc ion binding"/>
    <property type="evidence" value="ECO:0007669"/>
    <property type="project" value="UniProtKB-UniRule"/>
</dbReference>
<dbReference type="GO" id="GO:0006364">
    <property type="term" value="P:rRNA processing"/>
    <property type="evidence" value="ECO:0007669"/>
    <property type="project" value="UniProtKB-UniRule"/>
</dbReference>
<dbReference type="Gene3D" id="3.40.390.30">
    <property type="entry name" value="Metalloproteases ('zincins'), catalytic domain"/>
    <property type="match status" value="1"/>
</dbReference>
<dbReference type="HAMAP" id="MF_00009">
    <property type="entry name" value="Endoribonucl_YbeY"/>
    <property type="match status" value="1"/>
</dbReference>
<dbReference type="InterPro" id="IPR023091">
    <property type="entry name" value="MetalPrtase_cat_dom_sf_prd"/>
</dbReference>
<dbReference type="InterPro" id="IPR002036">
    <property type="entry name" value="YbeY"/>
</dbReference>
<dbReference type="InterPro" id="IPR020549">
    <property type="entry name" value="YbeY_CS"/>
</dbReference>
<dbReference type="NCBIfam" id="TIGR00043">
    <property type="entry name" value="rRNA maturation RNase YbeY"/>
    <property type="match status" value="1"/>
</dbReference>
<dbReference type="PANTHER" id="PTHR46986">
    <property type="entry name" value="ENDORIBONUCLEASE YBEY, CHLOROPLASTIC"/>
    <property type="match status" value="1"/>
</dbReference>
<dbReference type="PANTHER" id="PTHR46986:SF1">
    <property type="entry name" value="ENDORIBONUCLEASE YBEY, CHLOROPLASTIC"/>
    <property type="match status" value="1"/>
</dbReference>
<dbReference type="Pfam" id="PF02130">
    <property type="entry name" value="YbeY"/>
    <property type="match status" value="1"/>
</dbReference>
<dbReference type="SUPFAM" id="SSF55486">
    <property type="entry name" value="Metalloproteases ('zincins'), catalytic domain"/>
    <property type="match status" value="1"/>
</dbReference>
<dbReference type="PROSITE" id="PS01306">
    <property type="entry name" value="UPF0054"/>
    <property type="match status" value="1"/>
</dbReference>
<organism>
    <name type="scientific">Bradyrhizobium sp. (strain BTAi1 / ATCC BAA-1182)</name>
    <dbReference type="NCBI Taxonomy" id="288000"/>
    <lineage>
        <taxon>Bacteria</taxon>
        <taxon>Pseudomonadati</taxon>
        <taxon>Pseudomonadota</taxon>
        <taxon>Alphaproteobacteria</taxon>
        <taxon>Hyphomicrobiales</taxon>
        <taxon>Nitrobacteraceae</taxon>
        <taxon>Bradyrhizobium</taxon>
    </lineage>
</organism>